<feature type="chain" id="PRO_0000198534" description="Ribonuclease P protein component">
    <location>
        <begin position="1"/>
        <end position="109"/>
    </location>
</feature>
<reference key="1">
    <citation type="journal article" date="2002" name="Mol. Microbiol.">
        <title>Genome sequence of Streptococcus agalactiae, a pathogen causing invasive neonatal disease.</title>
        <authorList>
            <person name="Glaser P."/>
            <person name="Rusniok C."/>
            <person name="Buchrieser C."/>
            <person name="Chevalier F."/>
            <person name="Frangeul L."/>
            <person name="Msadek T."/>
            <person name="Zouine M."/>
            <person name="Couve E."/>
            <person name="Lalioui L."/>
            <person name="Poyart C."/>
            <person name="Trieu-Cuot P."/>
            <person name="Kunst F."/>
        </authorList>
    </citation>
    <scope>NUCLEOTIDE SEQUENCE [LARGE SCALE GENOMIC DNA]</scope>
    <source>
        <strain>NEM316</strain>
    </source>
</reference>
<comment type="function">
    <text evidence="1">RNaseP catalyzes the removal of the 5'-leader sequence from pre-tRNA to produce the mature 5'-terminus. It can also cleave other RNA substrates such as 4.5S RNA. The protein component plays an auxiliary but essential role in vivo by binding to the 5'-leader sequence and broadening the substrate specificity of the ribozyme.</text>
</comment>
<comment type="catalytic activity">
    <reaction evidence="1">
        <text>Endonucleolytic cleavage of RNA, removing 5'-extranucleotides from tRNA precursor.</text>
        <dbReference type="EC" id="3.1.26.5"/>
    </reaction>
</comment>
<comment type="subunit">
    <text evidence="1">Consists of a catalytic RNA component (M1 or rnpB) and a protein subunit.</text>
</comment>
<comment type="similarity">
    <text evidence="1">Belongs to the RnpA family.</text>
</comment>
<gene>
    <name evidence="1" type="primary">rnpA</name>
    <name type="ordered locus">gbs0443</name>
</gene>
<name>RNPA_STRA3</name>
<protein>
    <recommendedName>
        <fullName evidence="1">Ribonuclease P protein component</fullName>
        <shortName evidence="1">RNase P protein</shortName>
        <shortName evidence="1">RNaseP protein</shortName>
        <ecNumber evidence="1">3.1.26.5</ecNumber>
    </recommendedName>
    <alternativeName>
        <fullName evidence="1">Protein C5</fullName>
    </alternativeName>
</protein>
<proteinExistence type="inferred from homology"/>
<keyword id="KW-0255">Endonuclease</keyword>
<keyword id="KW-0378">Hydrolase</keyword>
<keyword id="KW-0540">Nuclease</keyword>
<keyword id="KW-0694">RNA-binding</keyword>
<keyword id="KW-0819">tRNA processing</keyword>
<dbReference type="EC" id="3.1.26.5" evidence="1"/>
<dbReference type="EMBL" id="AL766845">
    <property type="protein sequence ID" value="CAD46087.1"/>
    <property type="molecule type" value="Genomic_DNA"/>
</dbReference>
<dbReference type="RefSeq" id="WP_000754612.1">
    <property type="nucleotide sequence ID" value="NC_004368.1"/>
</dbReference>
<dbReference type="SMR" id="Q8E6W5"/>
<dbReference type="KEGG" id="san:gbs0443"/>
<dbReference type="eggNOG" id="COG0594">
    <property type="taxonomic scope" value="Bacteria"/>
</dbReference>
<dbReference type="HOGENOM" id="CLU_117179_9_1_9"/>
<dbReference type="Proteomes" id="UP000000823">
    <property type="component" value="Chromosome"/>
</dbReference>
<dbReference type="GO" id="GO:0030677">
    <property type="term" value="C:ribonuclease P complex"/>
    <property type="evidence" value="ECO:0007669"/>
    <property type="project" value="TreeGrafter"/>
</dbReference>
<dbReference type="GO" id="GO:0042781">
    <property type="term" value="F:3'-tRNA processing endoribonuclease activity"/>
    <property type="evidence" value="ECO:0007669"/>
    <property type="project" value="TreeGrafter"/>
</dbReference>
<dbReference type="GO" id="GO:0004526">
    <property type="term" value="F:ribonuclease P activity"/>
    <property type="evidence" value="ECO:0007669"/>
    <property type="project" value="UniProtKB-UniRule"/>
</dbReference>
<dbReference type="GO" id="GO:0000049">
    <property type="term" value="F:tRNA binding"/>
    <property type="evidence" value="ECO:0007669"/>
    <property type="project" value="UniProtKB-UniRule"/>
</dbReference>
<dbReference type="GO" id="GO:0001682">
    <property type="term" value="P:tRNA 5'-leader removal"/>
    <property type="evidence" value="ECO:0007669"/>
    <property type="project" value="UniProtKB-UniRule"/>
</dbReference>
<dbReference type="FunFam" id="3.30.230.10:FF:000021">
    <property type="entry name" value="Ribonuclease P protein component"/>
    <property type="match status" value="1"/>
</dbReference>
<dbReference type="Gene3D" id="3.30.230.10">
    <property type="match status" value="1"/>
</dbReference>
<dbReference type="HAMAP" id="MF_00227">
    <property type="entry name" value="RNase_P"/>
    <property type="match status" value="1"/>
</dbReference>
<dbReference type="InterPro" id="IPR020568">
    <property type="entry name" value="Ribosomal_Su5_D2-typ_SF"/>
</dbReference>
<dbReference type="InterPro" id="IPR014721">
    <property type="entry name" value="Ribsml_uS5_D2-typ_fold_subgr"/>
</dbReference>
<dbReference type="InterPro" id="IPR000100">
    <property type="entry name" value="RNase_P"/>
</dbReference>
<dbReference type="InterPro" id="IPR020539">
    <property type="entry name" value="RNase_P_CS"/>
</dbReference>
<dbReference type="NCBIfam" id="TIGR00188">
    <property type="entry name" value="rnpA"/>
    <property type="match status" value="1"/>
</dbReference>
<dbReference type="PANTHER" id="PTHR33992">
    <property type="entry name" value="RIBONUCLEASE P PROTEIN COMPONENT"/>
    <property type="match status" value="1"/>
</dbReference>
<dbReference type="PANTHER" id="PTHR33992:SF1">
    <property type="entry name" value="RIBONUCLEASE P PROTEIN COMPONENT"/>
    <property type="match status" value="1"/>
</dbReference>
<dbReference type="Pfam" id="PF00825">
    <property type="entry name" value="Ribonuclease_P"/>
    <property type="match status" value="1"/>
</dbReference>
<dbReference type="SUPFAM" id="SSF54211">
    <property type="entry name" value="Ribosomal protein S5 domain 2-like"/>
    <property type="match status" value="1"/>
</dbReference>
<dbReference type="PROSITE" id="PS00648">
    <property type="entry name" value="RIBONUCLEASE_P"/>
    <property type="match status" value="1"/>
</dbReference>
<accession>Q8E6W5</accession>
<sequence length="109" mass="12735">MKKTYRVKSDKDFQMIFSRGKNVANRKFVIYYLEKEQKHFRVGISVSKKLGNAVVRNAIKRKIRHVLLSQKTALQDYDFVVIARKGVEELNYQALEKNLIHVLKIAGLI</sequence>
<evidence type="ECO:0000255" key="1">
    <source>
        <dbReference type="HAMAP-Rule" id="MF_00227"/>
    </source>
</evidence>
<organism>
    <name type="scientific">Streptococcus agalactiae serotype III (strain NEM316)</name>
    <dbReference type="NCBI Taxonomy" id="211110"/>
    <lineage>
        <taxon>Bacteria</taxon>
        <taxon>Bacillati</taxon>
        <taxon>Bacillota</taxon>
        <taxon>Bacilli</taxon>
        <taxon>Lactobacillales</taxon>
        <taxon>Streptococcaceae</taxon>
        <taxon>Streptococcus</taxon>
    </lineage>
</organism>